<evidence type="ECO:0000255" key="1">
    <source>
        <dbReference type="HAMAP-Rule" id="MF_00358"/>
    </source>
</evidence>
<evidence type="ECO:0000305" key="2"/>
<dbReference type="EMBL" id="AP006841">
    <property type="protein sequence ID" value="BAD50945.1"/>
    <property type="molecule type" value="Genomic_DNA"/>
</dbReference>
<dbReference type="RefSeq" id="WP_005782152.1">
    <property type="nucleotide sequence ID" value="NZ_UYXF01000007.1"/>
</dbReference>
<dbReference type="RefSeq" id="YP_101479.1">
    <property type="nucleotide sequence ID" value="NC_006347.1"/>
</dbReference>
<dbReference type="SMR" id="Q64NI7"/>
<dbReference type="STRING" id="295405.BF4202"/>
<dbReference type="GeneID" id="93114649"/>
<dbReference type="KEGG" id="bfr:BF4202"/>
<dbReference type="PATRIC" id="fig|295405.11.peg.4057"/>
<dbReference type="HOGENOM" id="CLU_159258_2_0_10"/>
<dbReference type="OrthoDB" id="598353at2"/>
<dbReference type="Proteomes" id="UP000002197">
    <property type="component" value="Chromosome"/>
</dbReference>
<dbReference type="GO" id="GO:1990904">
    <property type="term" value="C:ribonucleoprotein complex"/>
    <property type="evidence" value="ECO:0007669"/>
    <property type="project" value="UniProtKB-KW"/>
</dbReference>
<dbReference type="GO" id="GO:0005840">
    <property type="term" value="C:ribosome"/>
    <property type="evidence" value="ECO:0007669"/>
    <property type="project" value="UniProtKB-KW"/>
</dbReference>
<dbReference type="GO" id="GO:0003735">
    <property type="term" value="F:structural constituent of ribosome"/>
    <property type="evidence" value="ECO:0007669"/>
    <property type="project" value="InterPro"/>
</dbReference>
<dbReference type="GO" id="GO:0006412">
    <property type="term" value="P:translation"/>
    <property type="evidence" value="ECO:0007669"/>
    <property type="project" value="UniProtKB-UniRule"/>
</dbReference>
<dbReference type="Gene3D" id="1.20.5.1150">
    <property type="entry name" value="Ribosomal protein S8"/>
    <property type="match status" value="1"/>
</dbReference>
<dbReference type="HAMAP" id="MF_00358">
    <property type="entry name" value="Ribosomal_bS21"/>
    <property type="match status" value="1"/>
</dbReference>
<dbReference type="InterPro" id="IPR001911">
    <property type="entry name" value="Ribosomal_bS21"/>
</dbReference>
<dbReference type="InterPro" id="IPR038380">
    <property type="entry name" value="Ribosomal_bS21_sf"/>
</dbReference>
<dbReference type="NCBIfam" id="TIGR00030">
    <property type="entry name" value="S21p"/>
    <property type="match status" value="1"/>
</dbReference>
<dbReference type="Pfam" id="PF01165">
    <property type="entry name" value="Ribosomal_S21"/>
    <property type="match status" value="1"/>
</dbReference>
<dbReference type="PRINTS" id="PR00976">
    <property type="entry name" value="RIBOSOMALS21"/>
</dbReference>
<keyword id="KW-0687">Ribonucleoprotein</keyword>
<keyword id="KW-0689">Ribosomal protein</keyword>
<name>RS21_BACFR</name>
<proteinExistence type="inferred from homology"/>
<feature type="chain" id="PRO_0000178296" description="Small ribosomal subunit protein bS21">
    <location>
        <begin position="1"/>
        <end position="63"/>
    </location>
</feature>
<organism>
    <name type="scientific">Bacteroides fragilis (strain YCH46)</name>
    <dbReference type="NCBI Taxonomy" id="295405"/>
    <lineage>
        <taxon>Bacteria</taxon>
        <taxon>Pseudomonadati</taxon>
        <taxon>Bacteroidota</taxon>
        <taxon>Bacteroidia</taxon>
        <taxon>Bacteroidales</taxon>
        <taxon>Bacteroidaceae</taxon>
        <taxon>Bacteroides</taxon>
    </lineage>
</organism>
<sequence>MIVVPVKEGENIEKALKKFKRKFEKTGIVKELRSRQQFDKPSVTKRLKKERAVYVQKLQQVED</sequence>
<reference key="1">
    <citation type="journal article" date="2004" name="Proc. Natl. Acad. Sci. U.S.A.">
        <title>Genomic analysis of Bacteroides fragilis reveals extensive DNA inversions regulating cell surface adaptation.</title>
        <authorList>
            <person name="Kuwahara T."/>
            <person name="Yamashita A."/>
            <person name="Hirakawa H."/>
            <person name="Nakayama H."/>
            <person name="Toh H."/>
            <person name="Okada N."/>
            <person name="Kuhara S."/>
            <person name="Hattori M."/>
            <person name="Hayashi T."/>
            <person name="Ohnishi Y."/>
        </authorList>
    </citation>
    <scope>NUCLEOTIDE SEQUENCE [LARGE SCALE GENOMIC DNA]</scope>
    <source>
        <strain>YCH46</strain>
    </source>
</reference>
<gene>
    <name evidence="1" type="primary">rpsU</name>
    <name type="ordered locus">BF4202</name>
</gene>
<protein>
    <recommendedName>
        <fullName evidence="1">Small ribosomal subunit protein bS21</fullName>
    </recommendedName>
    <alternativeName>
        <fullName evidence="2">30S ribosomal protein S21</fullName>
    </alternativeName>
</protein>
<comment type="similarity">
    <text evidence="1">Belongs to the bacterial ribosomal protein bS21 family.</text>
</comment>
<accession>Q64NI7</accession>